<sequence length="325" mass="36989">MITDRQLSILNAIVEDYVDFGQPVGSKTLIERHNLNVSPATIRNEMKQLEDLNYIEKTHSSSGRSPSQLGFRYYVNRLLEQTSHQKTNKLRRLNQLLVENQYDVSSALTYFADELSNISQYTTLVVHPNHKQDIINNVHLIRANPNLVIMVIVFSSGHVEHVHLASDIPFSNDKLNTISNFVTNKLTEFNQNLQDDIVSFVQSEQEEIFINKLLNTMNNHISNQSNSIYMGGKVKLIDALNESNVSSIQPILQYIESNRIAELLQDISSPNINVKIGNEIDDSLSDISIVTSQYHFDETLKGQIAVIGPTAMHYQNVIQLLNRIW</sequence>
<name>HRCA_STAAR</name>
<dbReference type="EMBL" id="BX571856">
    <property type="protein sequence ID" value="CAG40654.1"/>
    <property type="molecule type" value="Genomic_DNA"/>
</dbReference>
<dbReference type="RefSeq" id="WP_000627147.1">
    <property type="nucleotide sequence ID" value="NC_002952.2"/>
</dbReference>
<dbReference type="SMR" id="Q6GGB8"/>
<dbReference type="KEGG" id="sar:SAR1659"/>
<dbReference type="HOGENOM" id="CLU_050019_1_0_9"/>
<dbReference type="Proteomes" id="UP000000596">
    <property type="component" value="Chromosome"/>
</dbReference>
<dbReference type="GO" id="GO:0003677">
    <property type="term" value="F:DNA binding"/>
    <property type="evidence" value="ECO:0007669"/>
    <property type="project" value="InterPro"/>
</dbReference>
<dbReference type="GO" id="GO:0045892">
    <property type="term" value="P:negative regulation of DNA-templated transcription"/>
    <property type="evidence" value="ECO:0007669"/>
    <property type="project" value="UniProtKB-UniRule"/>
</dbReference>
<dbReference type="FunFam" id="1.10.10.10:FF:000049">
    <property type="entry name" value="Heat-inducible transcription repressor HrcA"/>
    <property type="match status" value="1"/>
</dbReference>
<dbReference type="Gene3D" id="3.30.450.40">
    <property type="match status" value="1"/>
</dbReference>
<dbReference type="Gene3D" id="3.30.390.60">
    <property type="entry name" value="Heat-inducible transcription repressor hrca homolog, domain 3"/>
    <property type="match status" value="1"/>
</dbReference>
<dbReference type="Gene3D" id="1.10.10.10">
    <property type="entry name" value="Winged helix-like DNA-binding domain superfamily/Winged helix DNA-binding domain"/>
    <property type="match status" value="1"/>
</dbReference>
<dbReference type="HAMAP" id="MF_00081">
    <property type="entry name" value="HrcA"/>
    <property type="match status" value="1"/>
</dbReference>
<dbReference type="InterPro" id="IPR029016">
    <property type="entry name" value="GAF-like_dom_sf"/>
</dbReference>
<dbReference type="InterPro" id="IPR002571">
    <property type="entry name" value="HrcA"/>
</dbReference>
<dbReference type="InterPro" id="IPR021153">
    <property type="entry name" value="HrcA_C"/>
</dbReference>
<dbReference type="InterPro" id="IPR036388">
    <property type="entry name" value="WH-like_DNA-bd_sf"/>
</dbReference>
<dbReference type="InterPro" id="IPR036390">
    <property type="entry name" value="WH_DNA-bd_sf"/>
</dbReference>
<dbReference type="InterPro" id="IPR023120">
    <property type="entry name" value="WHTH_transcript_rep_HrcA_IDD"/>
</dbReference>
<dbReference type="NCBIfam" id="TIGR00331">
    <property type="entry name" value="hrcA"/>
    <property type="match status" value="1"/>
</dbReference>
<dbReference type="PANTHER" id="PTHR34824">
    <property type="entry name" value="HEAT-INDUCIBLE TRANSCRIPTION REPRESSOR HRCA"/>
    <property type="match status" value="1"/>
</dbReference>
<dbReference type="PANTHER" id="PTHR34824:SF1">
    <property type="entry name" value="HEAT-INDUCIBLE TRANSCRIPTION REPRESSOR HRCA"/>
    <property type="match status" value="1"/>
</dbReference>
<dbReference type="Pfam" id="PF01628">
    <property type="entry name" value="HrcA"/>
    <property type="match status" value="1"/>
</dbReference>
<dbReference type="PIRSF" id="PIRSF005485">
    <property type="entry name" value="HrcA"/>
    <property type="match status" value="1"/>
</dbReference>
<dbReference type="SUPFAM" id="SSF55781">
    <property type="entry name" value="GAF domain-like"/>
    <property type="match status" value="1"/>
</dbReference>
<dbReference type="SUPFAM" id="SSF46785">
    <property type="entry name" value="Winged helix' DNA-binding domain"/>
    <property type="match status" value="1"/>
</dbReference>
<keyword id="KW-0678">Repressor</keyword>
<keyword id="KW-0346">Stress response</keyword>
<keyword id="KW-0804">Transcription</keyword>
<keyword id="KW-0805">Transcription regulation</keyword>
<organism>
    <name type="scientific">Staphylococcus aureus (strain MRSA252)</name>
    <dbReference type="NCBI Taxonomy" id="282458"/>
    <lineage>
        <taxon>Bacteria</taxon>
        <taxon>Bacillati</taxon>
        <taxon>Bacillota</taxon>
        <taxon>Bacilli</taxon>
        <taxon>Bacillales</taxon>
        <taxon>Staphylococcaceae</taxon>
        <taxon>Staphylococcus</taxon>
    </lineage>
</organism>
<feature type="chain" id="PRO_0000182528" description="Heat-inducible transcription repressor HrcA">
    <location>
        <begin position="1"/>
        <end position="325"/>
    </location>
</feature>
<accession>Q6GGB8</accession>
<protein>
    <recommendedName>
        <fullName evidence="1">Heat-inducible transcription repressor HrcA</fullName>
    </recommendedName>
</protein>
<comment type="function">
    <text evidence="1">Negative regulator of class I heat shock genes (grpE-dnaK-dnaJ and groELS operons). Prevents heat-shock induction of these operons.</text>
</comment>
<comment type="similarity">
    <text evidence="1">Belongs to the HrcA family.</text>
</comment>
<proteinExistence type="inferred from homology"/>
<gene>
    <name evidence="1" type="primary">hrcA</name>
    <name type="ordered locus">SAR1659</name>
</gene>
<reference key="1">
    <citation type="journal article" date="2004" name="Proc. Natl. Acad. Sci. U.S.A.">
        <title>Complete genomes of two clinical Staphylococcus aureus strains: evidence for the rapid evolution of virulence and drug resistance.</title>
        <authorList>
            <person name="Holden M.T.G."/>
            <person name="Feil E.J."/>
            <person name="Lindsay J.A."/>
            <person name="Peacock S.J."/>
            <person name="Day N.P.J."/>
            <person name="Enright M.C."/>
            <person name="Foster T.J."/>
            <person name="Moore C.E."/>
            <person name="Hurst L."/>
            <person name="Atkin R."/>
            <person name="Barron A."/>
            <person name="Bason N."/>
            <person name="Bentley S.D."/>
            <person name="Chillingworth C."/>
            <person name="Chillingworth T."/>
            <person name="Churcher C."/>
            <person name="Clark L."/>
            <person name="Corton C."/>
            <person name="Cronin A."/>
            <person name="Doggett J."/>
            <person name="Dowd L."/>
            <person name="Feltwell T."/>
            <person name="Hance Z."/>
            <person name="Harris B."/>
            <person name="Hauser H."/>
            <person name="Holroyd S."/>
            <person name="Jagels K."/>
            <person name="James K.D."/>
            <person name="Lennard N."/>
            <person name="Line A."/>
            <person name="Mayes R."/>
            <person name="Moule S."/>
            <person name="Mungall K."/>
            <person name="Ormond D."/>
            <person name="Quail M.A."/>
            <person name="Rabbinowitsch E."/>
            <person name="Rutherford K.M."/>
            <person name="Sanders M."/>
            <person name="Sharp S."/>
            <person name="Simmonds M."/>
            <person name="Stevens K."/>
            <person name="Whitehead S."/>
            <person name="Barrell B.G."/>
            <person name="Spratt B.G."/>
            <person name="Parkhill J."/>
        </authorList>
    </citation>
    <scope>NUCLEOTIDE SEQUENCE [LARGE SCALE GENOMIC DNA]</scope>
    <source>
        <strain>MRSA252</strain>
    </source>
</reference>
<evidence type="ECO:0000255" key="1">
    <source>
        <dbReference type="HAMAP-Rule" id="MF_00081"/>
    </source>
</evidence>